<reference key="1">
    <citation type="journal article" date="2002" name="Nature">
        <title>The genome sequence of Schizosaccharomyces pombe.</title>
        <authorList>
            <person name="Wood V."/>
            <person name="Gwilliam R."/>
            <person name="Rajandream M.A."/>
            <person name="Lyne M.H."/>
            <person name="Lyne R."/>
            <person name="Stewart A."/>
            <person name="Sgouros J.G."/>
            <person name="Peat N."/>
            <person name="Hayles J."/>
            <person name="Baker S.G."/>
            <person name="Basham D."/>
            <person name="Bowman S."/>
            <person name="Brooks K."/>
            <person name="Brown D."/>
            <person name="Brown S."/>
            <person name="Chillingworth T."/>
            <person name="Churcher C.M."/>
            <person name="Collins M."/>
            <person name="Connor R."/>
            <person name="Cronin A."/>
            <person name="Davis P."/>
            <person name="Feltwell T."/>
            <person name="Fraser A."/>
            <person name="Gentles S."/>
            <person name="Goble A."/>
            <person name="Hamlin N."/>
            <person name="Harris D.E."/>
            <person name="Hidalgo J."/>
            <person name="Hodgson G."/>
            <person name="Holroyd S."/>
            <person name="Hornsby T."/>
            <person name="Howarth S."/>
            <person name="Huckle E.J."/>
            <person name="Hunt S."/>
            <person name="Jagels K."/>
            <person name="James K.D."/>
            <person name="Jones L."/>
            <person name="Jones M."/>
            <person name="Leather S."/>
            <person name="McDonald S."/>
            <person name="McLean J."/>
            <person name="Mooney P."/>
            <person name="Moule S."/>
            <person name="Mungall K.L."/>
            <person name="Murphy L.D."/>
            <person name="Niblett D."/>
            <person name="Odell C."/>
            <person name="Oliver K."/>
            <person name="O'Neil S."/>
            <person name="Pearson D."/>
            <person name="Quail M.A."/>
            <person name="Rabbinowitsch E."/>
            <person name="Rutherford K.M."/>
            <person name="Rutter S."/>
            <person name="Saunders D."/>
            <person name="Seeger K."/>
            <person name="Sharp S."/>
            <person name="Skelton J."/>
            <person name="Simmonds M.N."/>
            <person name="Squares R."/>
            <person name="Squares S."/>
            <person name="Stevens K."/>
            <person name="Taylor K."/>
            <person name="Taylor R.G."/>
            <person name="Tivey A."/>
            <person name="Walsh S.V."/>
            <person name="Warren T."/>
            <person name="Whitehead S."/>
            <person name="Woodward J.R."/>
            <person name="Volckaert G."/>
            <person name="Aert R."/>
            <person name="Robben J."/>
            <person name="Grymonprez B."/>
            <person name="Weltjens I."/>
            <person name="Vanstreels E."/>
            <person name="Rieger M."/>
            <person name="Schaefer M."/>
            <person name="Mueller-Auer S."/>
            <person name="Gabel C."/>
            <person name="Fuchs M."/>
            <person name="Duesterhoeft A."/>
            <person name="Fritzc C."/>
            <person name="Holzer E."/>
            <person name="Moestl D."/>
            <person name="Hilbert H."/>
            <person name="Borzym K."/>
            <person name="Langer I."/>
            <person name="Beck A."/>
            <person name="Lehrach H."/>
            <person name="Reinhardt R."/>
            <person name="Pohl T.M."/>
            <person name="Eger P."/>
            <person name="Zimmermann W."/>
            <person name="Wedler H."/>
            <person name="Wambutt R."/>
            <person name="Purnelle B."/>
            <person name="Goffeau A."/>
            <person name="Cadieu E."/>
            <person name="Dreano S."/>
            <person name="Gloux S."/>
            <person name="Lelaure V."/>
            <person name="Mottier S."/>
            <person name="Galibert F."/>
            <person name="Aves S.J."/>
            <person name="Xiang Z."/>
            <person name="Hunt C."/>
            <person name="Moore K."/>
            <person name="Hurst S.M."/>
            <person name="Lucas M."/>
            <person name="Rochet M."/>
            <person name="Gaillardin C."/>
            <person name="Tallada V.A."/>
            <person name="Garzon A."/>
            <person name="Thode G."/>
            <person name="Daga R.R."/>
            <person name="Cruzado L."/>
            <person name="Jimenez J."/>
            <person name="Sanchez M."/>
            <person name="del Rey F."/>
            <person name="Benito J."/>
            <person name="Dominguez A."/>
            <person name="Revuelta J.L."/>
            <person name="Moreno S."/>
            <person name="Armstrong J."/>
            <person name="Forsburg S.L."/>
            <person name="Cerutti L."/>
            <person name="Lowe T."/>
            <person name="McCombie W.R."/>
            <person name="Paulsen I."/>
            <person name="Potashkin J."/>
            <person name="Shpakovski G.V."/>
            <person name="Ussery D."/>
            <person name="Barrell B.G."/>
            <person name="Nurse P."/>
        </authorList>
    </citation>
    <scope>NUCLEOTIDE SEQUENCE [LARGE SCALE GENOMIC DNA]</scope>
    <source>
        <strain>972 / ATCC 24843</strain>
    </source>
</reference>
<reference key="2">
    <citation type="journal article" date="2012" name="Mol. Cell. Biol.">
        <title>The RecQ4 orthologue Hrq1 is critical for DNA interstrand cross-link repair and genome stability in fission yeast.</title>
        <authorList>
            <person name="Groocock L.M."/>
            <person name="Prudden J."/>
            <person name="Perry J.J."/>
            <person name="Boddy M.N."/>
        </authorList>
    </citation>
    <scope>FUNCTION</scope>
    <scope>CATALYTIC ACTIVITY</scope>
    <scope>DISRUPTION PHENOTYPE</scope>
    <scope>SUBCELLULAR LOCATION</scope>
    <scope>INTERACTION WITH RHP14</scope>
</reference>
<name>HRQ1_SCHPO</name>
<accession>O13983</accession>
<accession>O42856</accession>
<gene>
    <name evidence="6" type="primary">hrq1</name>
    <name evidence="8" type="ORF">SPAC23A1.19c</name>
    <name evidence="8" type="ORF">SPAC26H5.01c</name>
</gene>
<proteinExistence type="evidence at protein level"/>
<dbReference type="EC" id="5.6.2.4" evidence="5"/>
<dbReference type="EMBL" id="CU329670">
    <property type="protein sequence ID" value="CAA16993.2"/>
    <property type="molecule type" value="Genomic_DNA"/>
</dbReference>
<dbReference type="RefSeq" id="NP_594448.2">
    <property type="nucleotide sequence ID" value="NM_001019877.2"/>
</dbReference>
<dbReference type="SMR" id="O13983"/>
<dbReference type="BioGRID" id="278518">
    <property type="interactions" value="160"/>
</dbReference>
<dbReference type="FunCoup" id="O13983">
    <property type="interactions" value="418"/>
</dbReference>
<dbReference type="STRING" id="284812.O13983"/>
<dbReference type="iPTMnet" id="O13983"/>
<dbReference type="PaxDb" id="4896-SPAC23A1.19c.1"/>
<dbReference type="EnsemblFungi" id="SPAC23A1.19c.1">
    <property type="protein sequence ID" value="SPAC23A1.19c.1:pep"/>
    <property type="gene ID" value="SPAC23A1.19c"/>
</dbReference>
<dbReference type="GeneID" id="2542036"/>
<dbReference type="KEGG" id="spo:2542036"/>
<dbReference type="PomBase" id="SPAC23A1.19c">
    <property type="gene designation" value="hrq1"/>
</dbReference>
<dbReference type="VEuPathDB" id="FungiDB:SPAC23A1.19c"/>
<dbReference type="eggNOG" id="KOG4150">
    <property type="taxonomic scope" value="Eukaryota"/>
</dbReference>
<dbReference type="HOGENOM" id="CLU_000809_1_0_1"/>
<dbReference type="InParanoid" id="O13983"/>
<dbReference type="OMA" id="GAVHLHQ"/>
<dbReference type="PhylomeDB" id="O13983"/>
<dbReference type="PRO" id="PR:O13983"/>
<dbReference type="Proteomes" id="UP000002485">
    <property type="component" value="Chromosome I"/>
</dbReference>
<dbReference type="GO" id="GO:0005634">
    <property type="term" value="C:nucleus"/>
    <property type="evidence" value="ECO:0000314"/>
    <property type="project" value="PomBase"/>
</dbReference>
<dbReference type="GO" id="GO:0035861">
    <property type="term" value="C:site of double-strand break"/>
    <property type="evidence" value="ECO:0000314"/>
    <property type="project" value="PomBase"/>
</dbReference>
<dbReference type="GO" id="GO:0043138">
    <property type="term" value="F:3'-5' DNA helicase activity"/>
    <property type="evidence" value="ECO:0000314"/>
    <property type="project" value="PomBase"/>
</dbReference>
<dbReference type="GO" id="GO:0005524">
    <property type="term" value="F:ATP binding"/>
    <property type="evidence" value="ECO:0000255"/>
    <property type="project" value="PomBase"/>
</dbReference>
<dbReference type="GO" id="GO:0016887">
    <property type="term" value="F:ATP hydrolysis activity"/>
    <property type="evidence" value="ECO:0007669"/>
    <property type="project" value="RHEA"/>
</dbReference>
<dbReference type="GO" id="GO:0000405">
    <property type="term" value="F:bubble DNA binding"/>
    <property type="evidence" value="ECO:0000314"/>
    <property type="project" value="PomBase"/>
</dbReference>
<dbReference type="GO" id="GO:0036297">
    <property type="term" value="P:interstrand cross-link repair"/>
    <property type="evidence" value="ECO:0000318"/>
    <property type="project" value="GO_Central"/>
</dbReference>
<dbReference type="GO" id="GO:0006289">
    <property type="term" value="P:nucleotide-excision repair"/>
    <property type="evidence" value="ECO:0000315"/>
    <property type="project" value="PomBase"/>
</dbReference>
<dbReference type="GO" id="GO:1901255">
    <property type="term" value="P:nucleotide-excision repair involved in interstrand cross-link repair"/>
    <property type="evidence" value="ECO:0000315"/>
    <property type="project" value="PomBase"/>
</dbReference>
<dbReference type="GO" id="GO:0070914">
    <property type="term" value="P:UV-damage excision repair"/>
    <property type="evidence" value="ECO:0000315"/>
    <property type="project" value="PomBase"/>
</dbReference>
<dbReference type="CDD" id="cd17923">
    <property type="entry name" value="DEXHc_Hrq1-like"/>
    <property type="match status" value="1"/>
</dbReference>
<dbReference type="CDD" id="cd18797">
    <property type="entry name" value="SF2_C_Hrq"/>
    <property type="match status" value="1"/>
</dbReference>
<dbReference type="FunFam" id="3.40.50.300:FF:002773">
    <property type="entry name" value="ATP-dependent helicase HRQ1"/>
    <property type="match status" value="1"/>
</dbReference>
<dbReference type="FunFam" id="3.40.50.300:FF:001137">
    <property type="entry name" value="DEAD/DEAH box helicase"/>
    <property type="match status" value="1"/>
</dbReference>
<dbReference type="Gene3D" id="3.40.50.300">
    <property type="entry name" value="P-loop containing nucleotide triphosphate hydrolases"/>
    <property type="match status" value="2"/>
</dbReference>
<dbReference type="InterPro" id="IPR014939">
    <property type="entry name" value="CDT1_Gemini-bd-like"/>
</dbReference>
<dbReference type="InterPro" id="IPR011545">
    <property type="entry name" value="DEAD/DEAH_box_helicase_dom"/>
</dbReference>
<dbReference type="InterPro" id="IPR014001">
    <property type="entry name" value="Helicase_ATP-bd"/>
</dbReference>
<dbReference type="InterPro" id="IPR001650">
    <property type="entry name" value="Helicase_C-like"/>
</dbReference>
<dbReference type="InterPro" id="IPR055227">
    <property type="entry name" value="HRQ1_WHD"/>
</dbReference>
<dbReference type="InterPro" id="IPR018973">
    <property type="entry name" value="MZB"/>
</dbReference>
<dbReference type="InterPro" id="IPR027417">
    <property type="entry name" value="P-loop_NTPase"/>
</dbReference>
<dbReference type="InterPro" id="IPR036390">
    <property type="entry name" value="WH_DNA-bd_sf"/>
</dbReference>
<dbReference type="PANTHER" id="PTHR47957">
    <property type="entry name" value="ATP-DEPENDENT HELICASE HRQ1"/>
    <property type="match status" value="1"/>
</dbReference>
<dbReference type="PANTHER" id="PTHR47957:SF3">
    <property type="entry name" value="ATP-DEPENDENT HELICASE HRQ1"/>
    <property type="match status" value="1"/>
</dbReference>
<dbReference type="Pfam" id="PF08839">
    <property type="entry name" value="CDT1"/>
    <property type="match status" value="1"/>
</dbReference>
<dbReference type="Pfam" id="PF00270">
    <property type="entry name" value="DEAD"/>
    <property type="match status" value="1"/>
</dbReference>
<dbReference type="Pfam" id="PF00271">
    <property type="entry name" value="Helicase_C"/>
    <property type="match status" value="1"/>
</dbReference>
<dbReference type="Pfam" id="PF09369">
    <property type="entry name" value="MZB"/>
    <property type="match status" value="1"/>
</dbReference>
<dbReference type="Pfam" id="PF22982">
    <property type="entry name" value="WHD_HRQ1"/>
    <property type="match status" value="1"/>
</dbReference>
<dbReference type="SMART" id="SM01075">
    <property type="entry name" value="CDT1"/>
    <property type="match status" value="1"/>
</dbReference>
<dbReference type="SMART" id="SM00487">
    <property type="entry name" value="DEXDc"/>
    <property type="match status" value="1"/>
</dbReference>
<dbReference type="SMART" id="SM00490">
    <property type="entry name" value="HELICc"/>
    <property type="match status" value="1"/>
</dbReference>
<dbReference type="SUPFAM" id="SSF52540">
    <property type="entry name" value="P-loop containing nucleoside triphosphate hydrolases"/>
    <property type="match status" value="1"/>
</dbReference>
<dbReference type="SUPFAM" id="SSF46785">
    <property type="entry name" value="Winged helix' DNA-binding domain"/>
    <property type="match status" value="1"/>
</dbReference>
<dbReference type="PROSITE" id="PS51192">
    <property type="entry name" value="HELICASE_ATP_BIND_1"/>
    <property type="match status" value="1"/>
</dbReference>
<dbReference type="PROSITE" id="PS51194">
    <property type="entry name" value="HELICASE_CTER"/>
    <property type="match status" value="1"/>
</dbReference>
<organism>
    <name type="scientific">Schizosaccharomyces pombe (strain 972 / ATCC 24843)</name>
    <name type="common">Fission yeast</name>
    <dbReference type="NCBI Taxonomy" id="284812"/>
    <lineage>
        <taxon>Eukaryota</taxon>
        <taxon>Fungi</taxon>
        <taxon>Dikarya</taxon>
        <taxon>Ascomycota</taxon>
        <taxon>Taphrinomycotina</taxon>
        <taxon>Schizosaccharomycetes</taxon>
        <taxon>Schizosaccharomycetales</taxon>
        <taxon>Schizosaccharomycetaceae</taxon>
        <taxon>Schizosaccharomyces</taxon>
    </lineage>
</organism>
<feature type="chain" id="PRO_0000353818" description="ATP-dependent helicase hrq1">
    <location>
        <begin position="1"/>
        <end position="1063"/>
    </location>
</feature>
<feature type="domain" description="Helicase ATP-binding" evidence="2">
    <location>
        <begin position="320"/>
        <end position="503"/>
    </location>
</feature>
<feature type="domain" description="Helicase C-terminal" evidence="3">
    <location>
        <begin position="539"/>
        <end position="717"/>
    </location>
</feature>
<feature type="region of interest" description="Disordered" evidence="4">
    <location>
        <begin position="224"/>
        <end position="243"/>
    </location>
</feature>
<feature type="short sequence motif" description="DEAH box">
    <location>
        <begin position="444"/>
        <end position="447"/>
    </location>
</feature>
<feature type="binding site" evidence="2">
    <location>
        <begin position="333"/>
        <end position="340"/>
    </location>
    <ligand>
        <name>ATP</name>
        <dbReference type="ChEBI" id="CHEBI:30616"/>
    </ligand>
</feature>
<protein>
    <recommendedName>
        <fullName evidence="7">ATP-dependent helicase hrq1</fullName>
        <ecNumber evidence="5">5.6.2.4</ecNumber>
    </recommendedName>
    <alternativeName>
        <fullName evidence="6">Homologous to recQ protein 1</fullName>
    </alternativeName>
</protein>
<sequence length="1063" mass="120970">MSQTPIKKEESNDQDDKFEFKKYINEGKLPLKADNPKKKPQLGTIQANQPIPSIFDNLFNLFKVINTTYTFLYLRNSLTITFPLLNSSVKQSLKKELTIGDLSQLREICPQIIELNYKSLASLALEINKNVYTDLNPELYTGSTVSQSSEYVLVIELLETQERSSKRRRREGPTMKANIQRQKLDFNNLKKAIELRNQKFLQGIKEYIKKCQLTELDPTQQLLTQSRKNQPVPPDSPSIPNDSIENCNLNTKACSIEELLNEIASESSYEGQIVQEALHTYPAVEAQYGALSRPLSQELINALYTSRNIEKTYKHQADAINHLWNGFHVIVSTSTSSGKSLIYQIPILQSLLEDNQSTAFFVFPTKSLAQDQKKSLIDILSYMPTLKNIRVDTFDGDTPLESRESIIRSANIIFTNPDMLHQTILPNANRWYYFFKNLKLFVLDEAHVYNGIFGVHVAFVLRRMRRIAEYFGNSQYRFVSCSATIEDPLQHMKKIFGVDNIKLINYTSSPSGSKKFVMWNPPYVDPKHPDDGKKSAISEASKLLIKFAEKRVRTIVFCRVRKTCESLMRLVRQELKTKQKGDLLSKIQSYRAGYTVQERRKIESEMFNGKLYGIIATNALELGIDIGSLDAVITIGFPYSLSNLRQQFGRAGRRNKSSLAVYIVETFPVDQFYLKHPILIHTQPNAELTLDLTNEVLLASHLQCAAYELPINIRSDEKFFGNQIQDICEANLEMVEESYRPHPKYLPFPASQVRIRSVSEDMFTLVDVTNDKNVILELLEPFRVALTAYEGAVYVYQGKTFIIRLLNINKRIITAHQVDVEWSTLQRDFTDVDPVRSLMKKTMHGSTNIYFGAVKATLHVFGYFKVNKQKDILDVVDITDHPVEIDSRGFWIDVPWHIIEVLSLKKINGAASIHAAQHALLSLMPIFISNSGNDIRTECKAGEKEYKEAKSERRRPSRLIFYDNCGDSSGAGLCNKAYEHTDELITMAIERIESCDCKVREGCPGCITSSKFEGGVCSGEVLDKVGALILLKMLLCQHVNLDIYADGPEIDSYHALRTLIPSC</sequence>
<keyword id="KW-0067">ATP-binding</keyword>
<keyword id="KW-0227">DNA damage</keyword>
<keyword id="KW-0234">DNA repair</keyword>
<keyword id="KW-0238">DNA-binding</keyword>
<keyword id="KW-0347">Helicase</keyword>
<keyword id="KW-0378">Hydrolase</keyword>
<keyword id="KW-0413">Isomerase</keyword>
<keyword id="KW-0547">Nucleotide-binding</keyword>
<keyword id="KW-0539">Nucleus</keyword>
<keyword id="KW-1185">Reference proteome</keyword>
<comment type="function">
    <text evidence="1 5">Helicase with 3'-5' helicase activity involved in genome stability (PubMed:22064477). Functions in the nucleotide excision repair (NER) pathway and plays a critical role in DNA interstrand cross-link repair (PubMed:22064477). Unwinds relatively long duplex DNA up to 120-bp and requires a long 3'-tail of at least 70 nucleotides for efficient unwinding of duplex DNA (By similarity). Shows both processive helicase and DNA strand annealing activities (By similarity). Affects telomere length by a non-catalytic mechanism, probably through inhibiting telomerase by competing with it for ssDNA binding (By similarity).</text>
</comment>
<comment type="catalytic activity">
    <reaction evidence="5">
        <text>Couples ATP hydrolysis with the unwinding of duplex DNA by translocating in the 3'-5' direction.</text>
        <dbReference type="EC" id="5.6.2.4"/>
    </reaction>
</comment>
<comment type="catalytic activity">
    <reaction evidence="5">
        <text>ATP + H2O = ADP + phosphate + H(+)</text>
        <dbReference type="Rhea" id="RHEA:13065"/>
        <dbReference type="ChEBI" id="CHEBI:15377"/>
        <dbReference type="ChEBI" id="CHEBI:15378"/>
        <dbReference type="ChEBI" id="CHEBI:30616"/>
        <dbReference type="ChEBI" id="CHEBI:43474"/>
        <dbReference type="ChEBI" id="CHEBI:456216"/>
        <dbReference type="EC" id="5.6.2.4"/>
    </reaction>
</comment>
<comment type="cofactor">
    <cofactor evidence="1">
        <name>Mg(2+)</name>
        <dbReference type="ChEBI" id="CHEBI:18420"/>
    </cofactor>
</comment>
<comment type="subunit">
    <text evidence="1 5">Forms heptamer rings (By similarity). Interacts with rhp14 (PubMed:22064477).</text>
</comment>
<comment type="subcellular location">
    <subcellularLocation>
        <location evidence="5">Nucleus</location>
    </subcellularLocation>
</comment>
<comment type="disruption phenotype">
    <text evidence="5">Leads to hypersensitivity to DNA interstrand cross-linking (ICL) agents mitomycin C (MMC) and cisplatin, in response to both chronic and acute exposures.</text>
</comment>
<comment type="similarity">
    <text evidence="7">Belongs to the helicase family. HRQ1 subfamily.</text>
</comment>
<evidence type="ECO:0000250" key="1">
    <source>
        <dbReference type="UniProtKB" id="Q05549"/>
    </source>
</evidence>
<evidence type="ECO:0000255" key="2">
    <source>
        <dbReference type="PROSITE-ProRule" id="PRU00541"/>
    </source>
</evidence>
<evidence type="ECO:0000255" key="3">
    <source>
        <dbReference type="PROSITE-ProRule" id="PRU00542"/>
    </source>
</evidence>
<evidence type="ECO:0000256" key="4">
    <source>
        <dbReference type="SAM" id="MobiDB-lite"/>
    </source>
</evidence>
<evidence type="ECO:0000269" key="5">
    <source>
    </source>
</evidence>
<evidence type="ECO:0000303" key="6">
    <source>
    </source>
</evidence>
<evidence type="ECO:0000305" key="7"/>
<evidence type="ECO:0000312" key="8">
    <source>
        <dbReference type="PomBase" id="SPAC23A1.19c"/>
    </source>
</evidence>